<feature type="chain" id="PRO_1000072406" description="Small ribosomal subunit protein uS7">
    <location>
        <begin position="1"/>
        <end position="155"/>
    </location>
</feature>
<organism>
    <name type="scientific">Fervidobacterium nodosum (strain ATCC 35602 / DSM 5306 / Rt17-B1)</name>
    <dbReference type="NCBI Taxonomy" id="381764"/>
    <lineage>
        <taxon>Bacteria</taxon>
        <taxon>Thermotogati</taxon>
        <taxon>Thermotogota</taxon>
        <taxon>Thermotogae</taxon>
        <taxon>Thermotogales</taxon>
        <taxon>Fervidobacteriaceae</taxon>
        <taxon>Fervidobacterium</taxon>
    </lineage>
</organism>
<reference key="1">
    <citation type="submission" date="2007-07" db="EMBL/GenBank/DDBJ databases">
        <title>Complete sequence of Fervidobacterium nodosum Rt17-B1.</title>
        <authorList>
            <consortium name="US DOE Joint Genome Institute"/>
            <person name="Copeland A."/>
            <person name="Lucas S."/>
            <person name="Lapidus A."/>
            <person name="Barry K."/>
            <person name="Glavina del Rio T."/>
            <person name="Dalin E."/>
            <person name="Tice H."/>
            <person name="Pitluck S."/>
            <person name="Saunders E."/>
            <person name="Brettin T."/>
            <person name="Bruce D."/>
            <person name="Detter J.C."/>
            <person name="Han C."/>
            <person name="Schmutz J."/>
            <person name="Larimer F."/>
            <person name="Land M."/>
            <person name="Hauser L."/>
            <person name="Kyrpides N."/>
            <person name="Mikhailova N."/>
            <person name="Nelson K."/>
            <person name="Gogarten J.P."/>
            <person name="Noll K."/>
            <person name="Richardson P."/>
        </authorList>
    </citation>
    <scope>NUCLEOTIDE SEQUENCE [LARGE SCALE GENOMIC DNA]</scope>
    <source>
        <strain>ATCC 35602 / DSM 5306 / Rt17-B1</strain>
    </source>
</reference>
<comment type="function">
    <text evidence="1">One of the primary rRNA binding proteins, it binds directly to 16S rRNA where it nucleates assembly of the head domain of the 30S subunit. Is located at the subunit interface close to the decoding center, probably blocks exit of the E-site tRNA.</text>
</comment>
<comment type="subunit">
    <text evidence="1">Part of the 30S ribosomal subunit. Contacts proteins S9 and S11.</text>
</comment>
<comment type="similarity">
    <text evidence="1">Belongs to the universal ribosomal protein uS7 family.</text>
</comment>
<proteinExistence type="inferred from homology"/>
<keyword id="KW-1185">Reference proteome</keyword>
<keyword id="KW-0687">Ribonucleoprotein</keyword>
<keyword id="KW-0689">Ribosomal protein</keyword>
<keyword id="KW-0694">RNA-binding</keyword>
<keyword id="KW-0699">rRNA-binding</keyword>
<keyword id="KW-0820">tRNA-binding</keyword>
<dbReference type="EMBL" id="CP000771">
    <property type="protein sequence ID" value="ABS60989.1"/>
    <property type="molecule type" value="Genomic_DNA"/>
</dbReference>
<dbReference type="RefSeq" id="WP_011994302.1">
    <property type="nucleotide sequence ID" value="NC_009718.1"/>
</dbReference>
<dbReference type="SMR" id="A7HM56"/>
<dbReference type="STRING" id="381764.Fnod_1142"/>
<dbReference type="KEGG" id="fno:Fnod_1142"/>
<dbReference type="eggNOG" id="COG0049">
    <property type="taxonomic scope" value="Bacteria"/>
</dbReference>
<dbReference type="HOGENOM" id="CLU_072226_1_1_0"/>
<dbReference type="OrthoDB" id="9807653at2"/>
<dbReference type="Proteomes" id="UP000002415">
    <property type="component" value="Chromosome"/>
</dbReference>
<dbReference type="GO" id="GO:0015935">
    <property type="term" value="C:small ribosomal subunit"/>
    <property type="evidence" value="ECO:0007669"/>
    <property type="project" value="InterPro"/>
</dbReference>
<dbReference type="GO" id="GO:0019843">
    <property type="term" value="F:rRNA binding"/>
    <property type="evidence" value="ECO:0007669"/>
    <property type="project" value="UniProtKB-UniRule"/>
</dbReference>
<dbReference type="GO" id="GO:0003735">
    <property type="term" value="F:structural constituent of ribosome"/>
    <property type="evidence" value="ECO:0007669"/>
    <property type="project" value="InterPro"/>
</dbReference>
<dbReference type="GO" id="GO:0000049">
    <property type="term" value="F:tRNA binding"/>
    <property type="evidence" value="ECO:0007669"/>
    <property type="project" value="UniProtKB-UniRule"/>
</dbReference>
<dbReference type="GO" id="GO:0006412">
    <property type="term" value="P:translation"/>
    <property type="evidence" value="ECO:0007669"/>
    <property type="project" value="UniProtKB-UniRule"/>
</dbReference>
<dbReference type="CDD" id="cd14869">
    <property type="entry name" value="uS7_Bacteria"/>
    <property type="match status" value="1"/>
</dbReference>
<dbReference type="FunFam" id="1.10.455.10:FF:000001">
    <property type="entry name" value="30S ribosomal protein S7"/>
    <property type="match status" value="1"/>
</dbReference>
<dbReference type="Gene3D" id="1.10.455.10">
    <property type="entry name" value="Ribosomal protein S7 domain"/>
    <property type="match status" value="1"/>
</dbReference>
<dbReference type="HAMAP" id="MF_00480_B">
    <property type="entry name" value="Ribosomal_uS7_B"/>
    <property type="match status" value="1"/>
</dbReference>
<dbReference type="InterPro" id="IPR000235">
    <property type="entry name" value="Ribosomal_uS7"/>
</dbReference>
<dbReference type="InterPro" id="IPR005717">
    <property type="entry name" value="Ribosomal_uS7_bac/org-type"/>
</dbReference>
<dbReference type="InterPro" id="IPR020606">
    <property type="entry name" value="Ribosomal_uS7_CS"/>
</dbReference>
<dbReference type="InterPro" id="IPR023798">
    <property type="entry name" value="Ribosomal_uS7_dom"/>
</dbReference>
<dbReference type="InterPro" id="IPR036823">
    <property type="entry name" value="Ribosomal_uS7_dom_sf"/>
</dbReference>
<dbReference type="NCBIfam" id="TIGR01029">
    <property type="entry name" value="rpsG_bact"/>
    <property type="match status" value="1"/>
</dbReference>
<dbReference type="PANTHER" id="PTHR11205">
    <property type="entry name" value="RIBOSOMAL PROTEIN S7"/>
    <property type="match status" value="1"/>
</dbReference>
<dbReference type="Pfam" id="PF00177">
    <property type="entry name" value="Ribosomal_S7"/>
    <property type="match status" value="1"/>
</dbReference>
<dbReference type="PIRSF" id="PIRSF002122">
    <property type="entry name" value="RPS7p_RPS7a_RPS5e_RPS7o"/>
    <property type="match status" value="1"/>
</dbReference>
<dbReference type="SUPFAM" id="SSF47973">
    <property type="entry name" value="Ribosomal protein S7"/>
    <property type="match status" value="1"/>
</dbReference>
<dbReference type="PROSITE" id="PS00052">
    <property type="entry name" value="RIBOSOMAL_S7"/>
    <property type="match status" value="1"/>
</dbReference>
<name>RS7_FERNB</name>
<gene>
    <name evidence="1" type="primary">rpsG</name>
    <name type="ordered locus">Fnod_1142</name>
</gene>
<sequence>MRRRRAEPRVVSPDPVYGEVLVTRMVNKIMWDGKKSIAQKIVYGAIDILSQKTGKDGIEVFKQAIENVKPIVEVRPRRIGGATYQVPVEVQEPRKTTLAIRWIVDIARSKKGKPMQEKLAEELLNAYNNTGAAIKKREDVHKMAEANRAFAHFRW</sequence>
<evidence type="ECO:0000255" key="1">
    <source>
        <dbReference type="HAMAP-Rule" id="MF_00480"/>
    </source>
</evidence>
<evidence type="ECO:0000305" key="2"/>
<protein>
    <recommendedName>
        <fullName evidence="1">Small ribosomal subunit protein uS7</fullName>
    </recommendedName>
    <alternativeName>
        <fullName evidence="2">30S ribosomal protein S7</fullName>
    </alternativeName>
</protein>
<accession>A7HM56</accession>